<accession>Q6AP51</accession>
<organism>
    <name type="scientific">Desulfotalea psychrophila (strain LSv54 / DSM 12343)</name>
    <dbReference type="NCBI Taxonomy" id="177439"/>
    <lineage>
        <taxon>Bacteria</taxon>
        <taxon>Pseudomonadati</taxon>
        <taxon>Thermodesulfobacteriota</taxon>
        <taxon>Desulfobulbia</taxon>
        <taxon>Desulfobulbales</taxon>
        <taxon>Desulfocapsaceae</taxon>
        <taxon>Desulfotalea</taxon>
    </lineage>
</organism>
<reference key="1">
    <citation type="journal article" date="2004" name="Environ. Microbiol.">
        <title>The genome of Desulfotalea psychrophila, a sulfate-reducing bacterium from permanently cold Arctic sediments.</title>
        <authorList>
            <person name="Rabus R."/>
            <person name="Ruepp A."/>
            <person name="Frickey T."/>
            <person name="Rattei T."/>
            <person name="Fartmann B."/>
            <person name="Stark M."/>
            <person name="Bauer M."/>
            <person name="Zibat A."/>
            <person name="Lombardot T."/>
            <person name="Becker I."/>
            <person name="Amann J."/>
            <person name="Gellner K."/>
            <person name="Teeling H."/>
            <person name="Leuschner W.D."/>
            <person name="Gloeckner F.-O."/>
            <person name="Lupas A.N."/>
            <person name="Amann R."/>
            <person name="Klenk H.-P."/>
        </authorList>
    </citation>
    <scope>NUCLEOTIDE SEQUENCE [LARGE SCALE GENOMIC DNA]</scope>
    <source>
        <strain>DSM 12343 / LSv54</strain>
    </source>
</reference>
<name>RL15_DESPS</name>
<evidence type="ECO:0000255" key="1">
    <source>
        <dbReference type="HAMAP-Rule" id="MF_01341"/>
    </source>
</evidence>
<evidence type="ECO:0000256" key="2">
    <source>
        <dbReference type="SAM" id="MobiDB-lite"/>
    </source>
</evidence>
<evidence type="ECO:0000305" key="3"/>
<keyword id="KW-1185">Reference proteome</keyword>
<keyword id="KW-0687">Ribonucleoprotein</keyword>
<keyword id="KW-0689">Ribosomal protein</keyword>
<keyword id="KW-0694">RNA-binding</keyword>
<keyword id="KW-0699">rRNA-binding</keyword>
<sequence>MLTLGNLSPQEGSTKQRKRLGRGPGSGHGKTAGRGHKGFKSRSGSGIKPGFEGGQMPLQRRLPKRGFTNIFKKEFSLVALSQLDKFEAGVVVSPAELVEAGMVKKGTLIKILANGEITKAVTVKVDKISSQAKAQIEAAGGTVVLTEVTAAE</sequence>
<dbReference type="EMBL" id="CR522870">
    <property type="protein sequence ID" value="CAG35873.1"/>
    <property type="status" value="ALT_INIT"/>
    <property type="molecule type" value="Genomic_DNA"/>
</dbReference>
<dbReference type="RefSeq" id="WP_041277681.1">
    <property type="nucleotide sequence ID" value="NC_006138.1"/>
</dbReference>
<dbReference type="SMR" id="Q6AP51"/>
<dbReference type="STRING" id="177439.DP1144"/>
<dbReference type="KEGG" id="dps:DP1144"/>
<dbReference type="eggNOG" id="COG0200">
    <property type="taxonomic scope" value="Bacteria"/>
</dbReference>
<dbReference type="HOGENOM" id="CLU_055188_4_2_7"/>
<dbReference type="OrthoDB" id="9810293at2"/>
<dbReference type="Proteomes" id="UP000000602">
    <property type="component" value="Chromosome"/>
</dbReference>
<dbReference type="GO" id="GO:0022625">
    <property type="term" value="C:cytosolic large ribosomal subunit"/>
    <property type="evidence" value="ECO:0007669"/>
    <property type="project" value="TreeGrafter"/>
</dbReference>
<dbReference type="GO" id="GO:0019843">
    <property type="term" value="F:rRNA binding"/>
    <property type="evidence" value="ECO:0007669"/>
    <property type="project" value="UniProtKB-UniRule"/>
</dbReference>
<dbReference type="GO" id="GO:0003735">
    <property type="term" value="F:structural constituent of ribosome"/>
    <property type="evidence" value="ECO:0007669"/>
    <property type="project" value="InterPro"/>
</dbReference>
<dbReference type="GO" id="GO:0006412">
    <property type="term" value="P:translation"/>
    <property type="evidence" value="ECO:0007669"/>
    <property type="project" value="UniProtKB-UniRule"/>
</dbReference>
<dbReference type="Gene3D" id="3.100.10.10">
    <property type="match status" value="1"/>
</dbReference>
<dbReference type="HAMAP" id="MF_01341">
    <property type="entry name" value="Ribosomal_uL15"/>
    <property type="match status" value="1"/>
</dbReference>
<dbReference type="InterPro" id="IPR030878">
    <property type="entry name" value="Ribosomal_uL15"/>
</dbReference>
<dbReference type="InterPro" id="IPR021131">
    <property type="entry name" value="Ribosomal_uL15/eL18"/>
</dbReference>
<dbReference type="InterPro" id="IPR036227">
    <property type="entry name" value="Ribosomal_uL15/eL18_sf"/>
</dbReference>
<dbReference type="InterPro" id="IPR005749">
    <property type="entry name" value="Ribosomal_uL15_bac-type"/>
</dbReference>
<dbReference type="InterPro" id="IPR001196">
    <property type="entry name" value="Ribosomal_uL15_CS"/>
</dbReference>
<dbReference type="NCBIfam" id="TIGR01071">
    <property type="entry name" value="rplO_bact"/>
    <property type="match status" value="1"/>
</dbReference>
<dbReference type="PANTHER" id="PTHR12934">
    <property type="entry name" value="50S RIBOSOMAL PROTEIN L15"/>
    <property type="match status" value="1"/>
</dbReference>
<dbReference type="PANTHER" id="PTHR12934:SF11">
    <property type="entry name" value="LARGE RIBOSOMAL SUBUNIT PROTEIN UL15M"/>
    <property type="match status" value="1"/>
</dbReference>
<dbReference type="Pfam" id="PF00828">
    <property type="entry name" value="Ribosomal_L27A"/>
    <property type="match status" value="1"/>
</dbReference>
<dbReference type="SUPFAM" id="SSF52080">
    <property type="entry name" value="Ribosomal proteins L15p and L18e"/>
    <property type="match status" value="1"/>
</dbReference>
<dbReference type="PROSITE" id="PS00475">
    <property type="entry name" value="RIBOSOMAL_L15"/>
    <property type="match status" value="1"/>
</dbReference>
<comment type="function">
    <text evidence="1">Binds to the 23S rRNA.</text>
</comment>
<comment type="subunit">
    <text evidence="1">Part of the 50S ribosomal subunit.</text>
</comment>
<comment type="similarity">
    <text evidence="1">Belongs to the universal ribosomal protein uL15 family.</text>
</comment>
<comment type="sequence caution" evidence="3">
    <conflict type="erroneous initiation">
        <sequence resource="EMBL-CDS" id="CAG35873"/>
    </conflict>
</comment>
<protein>
    <recommendedName>
        <fullName evidence="1">Large ribosomal subunit protein uL15</fullName>
    </recommendedName>
    <alternativeName>
        <fullName evidence="3">50S ribosomal protein L15</fullName>
    </alternativeName>
</protein>
<gene>
    <name evidence="1" type="primary">rplO</name>
    <name type="ordered locus">DP1144</name>
</gene>
<proteinExistence type="inferred from homology"/>
<feature type="chain" id="PRO_0000104717" description="Large ribosomal subunit protein uL15">
    <location>
        <begin position="1"/>
        <end position="152"/>
    </location>
</feature>
<feature type="region of interest" description="Disordered" evidence="2">
    <location>
        <begin position="1"/>
        <end position="62"/>
    </location>
</feature>
<feature type="compositionally biased region" description="Polar residues" evidence="2">
    <location>
        <begin position="1"/>
        <end position="13"/>
    </location>
</feature>
<feature type="compositionally biased region" description="Basic residues" evidence="2">
    <location>
        <begin position="31"/>
        <end position="40"/>
    </location>
</feature>